<proteinExistence type="inferred from homology"/>
<reference key="1">
    <citation type="journal article" date="2009" name="Genome Biol.">
        <title>Genomic and genetic analyses of diversity and plant interactions of Pseudomonas fluorescens.</title>
        <authorList>
            <person name="Silby M.W."/>
            <person name="Cerdeno-Tarraga A.M."/>
            <person name="Vernikos G.S."/>
            <person name="Giddens S.R."/>
            <person name="Jackson R.W."/>
            <person name="Preston G.M."/>
            <person name="Zhang X.-X."/>
            <person name="Moon C.D."/>
            <person name="Gehrig S.M."/>
            <person name="Godfrey S.A.C."/>
            <person name="Knight C.G."/>
            <person name="Malone J.G."/>
            <person name="Robinson Z."/>
            <person name="Spiers A.J."/>
            <person name="Harris S."/>
            <person name="Challis G.L."/>
            <person name="Yaxley A.M."/>
            <person name="Harris D."/>
            <person name="Seeger K."/>
            <person name="Murphy L."/>
            <person name="Rutter S."/>
            <person name="Squares R."/>
            <person name="Quail M.A."/>
            <person name="Saunders E."/>
            <person name="Mavromatis K."/>
            <person name="Brettin T.S."/>
            <person name="Bentley S.D."/>
            <person name="Hothersall J."/>
            <person name="Stephens E."/>
            <person name="Thomas C.M."/>
            <person name="Parkhill J."/>
            <person name="Levy S.B."/>
            <person name="Rainey P.B."/>
            <person name="Thomson N.R."/>
        </authorList>
    </citation>
    <scope>NUCLEOTIDE SEQUENCE [LARGE SCALE GENOMIC DNA]</scope>
    <source>
        <strain>SBW25</strain>
    </source>
</reference>
<accession>C3K329</accession>
<keyword id="KW-0378">Hydrolase</keyword>
<sequence length="283" mass="31663">MATYAVGDLQGCLEPLKCLLDRVAFDPAKDRLWLVGDVVNRGPESLETLRYLYSLRDSLVCVLGNHDLHLLAASNTIERLKKGDTLREILEAPDRAELLDWLRRQKIMHYDQGRNMALVHAGIPPQWTLKKALKCAAEVESALADDTLYTAYLDGMYGNDPVKWDNDLTGVARLRVITNYFTRMRFCTAEGKLDLKSKEGADTALPGYKPWFAHKERKTRDTKIVFGHWAALEGKCDEPGVFALDTGCVWGGAMTLMNIDTGERYSCQCESPLPVTLPATAKP</sequence>
<protein>
    <recommendedName>
        <fullName evidence="1">Bis(5'-nucleosyl)-tetraphosphatase, symmetrical</fullName>
        <ecNumber evidence="1">3.6.1.41</ecNumber>
    </recommendedName>
    <alternativeName>
        <fullName evidence="1">Ap4A hydrolase</fullName>
    </alternativeName>
    <alternativeName>
        <fullName evidence="1">Diadenosine 5',5'''-P1,P4-tetraphosphate pyrophosphohydrolase</fullName>
    </alternativeName>
    <alternativeName>
        <fullName evidence="1">Diadenosine tetraphosphatase</fullName>
    </alternativeName>
</protein>
<organism>
    <name type="scientific">Pseudomonas fluorescens (strain SBW25)</name>
    <dbReference type="NCBI Taxonomy" id="216595"/>
    <lineage>
        <taxon>Bacteria</taxon>
        <taxon>Pseudomonadati</taxon>
        <taxon>Pseudomonadota</taxon>
        <taxon>Gammaproteobacteria</taxon>
        <taxon>Pseudomonadales</taxon>
        <taxon>Pseudomonadaceae</taxon>
        <taxon>Pseudomonas</taxon>
    </lineage>
</organism>
<feature type="chain" id="PRO_1000204088" description="Bis(5'-nucleosyl)-tetraphosphatase, symmetrical">
    <location>
        <begin position="1"/>
        <end position="283"/>
    </location>
</feature>
<evidence type="ECO:0000255" key="1">
    <source>
        <dbReference type="HAMAP-Rule" id="MF_00199"/>
    </source>
</evidence>
<dbReference type="EC" id="3.6.1.41" evidence="1"/>
<dbReference type="EMBL" id="AM181176">
    <property type="protein sequence ID" value="CAY52851.1"/>
    <property type="molecule type" value="Genomic_DNA"/>
</dbReference>
<dbReference type="RefSeq" id="WP_015886177.1">
    <property type="nucleotide sequence ID" value="NC_012660.1"/>
</dbReference>
<dbReference type="SMR" id="C3K329"/>
<dbReference type="STRING" id="294.SRM1_05240"/>
<dbReference type="PATRIC" id="fig|216595.4.peg.5704"/>
<dbReference type="eggNOG" id="COG0639">
    <property type="taxonomic scope" value="Bacteria"/>
</dbReference>
<dbReference type="HOGENOM" id="CLU_056184_2_0_6"/>
<dbReference type="OrthoDB" id="9807890at2"/>
<dbReference type="GO" id="GO:0008803">
    <property type="term" value="F:bis(5'-nucleosyl)-tetraphosphatase (symmetrical) activity"/>
    <property type="evidence" value="ECO:0007669"/>
    <property type="project" value="UniProtKB-UniRule"/>
</dbReference>
<dbReference type="CDD" id="cd07422">
    <property type="entry name" value="MPP_ApaH"/>
    <property type="match status" value="1"/>
</dbReference>
<dbReference type="Gene3D" id="3.60.21.10">
    <property type="match status" value="1"/>
</dbReference>
<dbReference type="HAMAP" id="MF_00199">
    <property type="entry name" value="ApaH"/>
    <property type="match status" value="1"/>
</dbReference>
<dbReference type="InterPro" id="IPR004617">
    <property type="entry name" value="ApaH"/>
</dbReference>
<dbReference type="InterPro" id="IPR004843">
    <property type="entry name" value="Calcineurin-like_PHP_ApaH"/>
</dbReference>
<dbReference type="InterPro" id="IPR029052">
    <property type="entry name" value="Metallo-depent_PP-like"/>
</dbReference>
<dbReference type="NCBIfam" id="TIGR00668">
    <property type="entry name" value="apaH"/>
    <property type="match status" value="1"/>
</dbReference>
<dbReference type="NCBIfam" id="NF001204">
    <property type="entry name" value="PRK00166.1"/>
    <property type="match status" value="1"/>
</dbReference>
<dbReference type="PANTHER" id="PTHR40942">
    <property type="match status" value="1"/>
</dbReference>
<dbReference type="PANTHER" id="PTHR40942:SF4">
    <property type="entry name" value="CYTOCHROME C5"/>
    <property type="match status" value="1"/>
</dbReference>
<dbReference type="Pfam" id="PF00149">
    <property type="entry name" value="Metallophos"/>
    <property type="match status" value="1"/>
</dbReference>
<dbReference type="PIRSF" id="PIRSF000903">
    <property type="entry name" value="B5n-ttraPtase_sm"/>
    <property type="match status" value="1"/>
</dbReference>
<dbReference type="SUPFAM" id="SSF56300">
    <property type="entry name" value="Metallo-dependent phosphatases"/>
    <property type="match status" value="1"/>
</dbReference>
<comment type="function">
    <text evidence="1">Hydrolyzes diadenosine 5',5'''-P1,P4-tetraphosphate to yield ADP.</text>
</comment>
<comment type="catalytic activity">
    <reaction evidence="1">
        <text>P(1),P(4)-bis(5'-adenosyl) tetraphosphate + H2O = 2 ADP + 2 H(+)</text>
        <dbReference type="Rhea" id="RHEA:24252"/>
        <dbReference type="ChEBI" id="CHEBI:15377"/>
        <dbReference type="ChEBI" id="CHEBI:15378"/>
        <dbReference type="ChEBI" id="CHEBI:58141"/>
        <dbReference type="ChEBI" id="CHEBI:456216"/>
        <dbReference type="EC" id="3.6.1.41"/>
    </reaction>
</comment>
<comment type="similarity">
    <text evidence="1">Belongs to the Ap4A hydrolase family.</text>
</comment>
<gene>
    <name evidence="1" type="primary">apaH</name>
    <name type="ordered locus">PFLU_5580</name>
</gene>
<name>APAH_PSEFS</name>